<feature type="chain" id="PRO_0000133366" description="Protein E6">
    <location>
        <begin position="1"/>
        <end position="142"/>
    </location>
</feature>
<feature type="zinc finger region" evidence="1">
    <location>
        <begin position="27"/>
        <end position="63"/>
    </location>
</feature>
<feature type="zinc finger region" evidence="1">
    <location>
        <begin position="100"/>
        <end position="136"/>
    </location>
</feature>
<name>VE6_HPV48</name>
<accession>Q80920</accession>
<organismHost>
    <name type="scientific">Homo sapiens</name>
    <name type="common">Human</name>
    <dbReference type="NCBI Taxonomy" id="9606"/>
</organismHost>
<gene>
    <name evidence="1" type="primary">E6</name>
</gene>
<proteinExistence type="inferred from homology"/>
<reference key="1">
    <citation type="submission" date="1995-10" db="EMBL/GenBank/DDBJ databases">
        <authorList>
            <person name="Delius H."/>
        </authorList>
    </citation>
    <scope>NUCLEOTIDE SEQUENCE [GENOMIC DNA]</scope>
</reference>
<keyword id="KW-0010">Activator</keyword>
<keyword id="KW-0238">DNA-binding</keyword>
<keyword id="KW-0244">Early protein</keyword>
<keyword id="KW-1035">Host cytoplasm</keyword>
<keyword id="KW-1048">Host nucleus</keyword>
<keyword id="KW-0945">Host-virus interaction</keyword>
<keyword id="KW-1090">Inhibition of host innate immune response by virus</keyword>
<keyword id="KW-0479">Metal-binding</keyword>
<keyword id="KW-1119">Modulation of host cell apoptosis by virus</keyword>
<keyword id="KW-1185">Reference proteome</keyword>
<keyword id="KW-0804">Transcription</keyword>
<keyword id="KW-0805">Transcription regulation</keyword>
<keyword id="KW-0899">Viral immunoevasion</keyword>
<keyword id="KW-0862">Zinc</keyword>
<keyword id="KW-0863">Zinc-finger</keyword>
<protein>
    <recommendedName>
        <fullName evidence="1">Protein E6</fullName>
    </recommendedName>
</protein>
<comment type="function">
    <text evidence="1">Plays a major role in the induction and maintenance of cellular transformation. E6 associates with host UBE3A/E6-AP ubiquitin-protein ligase and modulates its activity. Protects host keratinocytes from apoptosis by mediating the degradation of host BAK1. May also inhibit host immune response.</text>
</comment>
<comment type="subunit">
    <text evidence="1">Forms homodimers. Interacts with ubiquitin-protein ligase UBE3A/E6-AP; this interaction stimulates UBE3A ubiquitin activity. Interacts with host BAK1.</text>
</comment>
<comment type="subcellular location">
    <subcellularLocation>
        <location evidence="1">Host cytoplasm</location>
    </subcellularLocation>
    <subcellularLocation>
        <location evidence="1">Host nucleus</location>
    </subcellularLocation>
</comment>
<comment type="similarity">
    <text evidence="1 2">Belongs to the papillomaviridae E6 protein family.</text>
</comment>
<organism>
    <name type="scientific">Human papillomavirus type 48</name>
    <dbReference type="NCBI Taxonomy" id="40538"/>
    <lineage>
        <taxon>Viruses</taxon>
        <taxon>Monodnaviria</taxon>
        <taxon>Shotokuvirae</taxon>
        <taxon>Cossaviricota</taxon>
        <taxon>Papovaviricetes</taxon>
        <taxon>Zurhausenvirales</taxon>
        <taxon>Papillomaviridae</taxon>
        <taxon>Firstpapillomavirinae</taxon>
        <taxon>Gammapapillomavirus</taxon>
        <taxon>Gammapapillomavirus 2</taxon>
    </lineage>
</organism>
<sequence length="142" mass="16751">MEPQFPTDLDSYCKYFNISFFDLVLKCIFCKFSVSIVDLASFHNKRLSVIWRDNTPFACCTKCLRLTALYEKDNFFVCTAKSHLLTGLVKKELSDINIRCQHCYSFLDYLEKLYHLYNDVDFLLIRGTWRGVCRNCISHEGR</sequence>
<evidence type="ECO:0000255" key="1">
    <source>
        <dbReference type="HAMAP-Rule" id="MF_04006"/>
    </source>
</evidence>
<evidence type="ECO:0000305" key="2"/>
<dbReference type="EMBL" id="U31789">
    <property type="protein sequence ID" value="AAA79464.1"/>
    <property type="molecule type" value="Genomic_DNA"/>
</dbReference>
<dbReference type="RefSeq" id="NP_043416.1">
    <property type="nucleotide sequence ID" value="NC_001690.1"/>
</dbReference>
<dbReference type="SMR" id="Q80920"/>
<dbReference type="GeneID" id="1403621"/>
<dbReference type="KEGG" id="vg:1403621"/>
<dbReference type="OrthoDB" id="27353at10239"/>
<dbReference type="Proteomes" id="UP000112710">
    <property type="component" value="Genome"/>
</dbReference>
<dbReference type="GO" id="GO:0030430">
    <property type="term" value="C:host cell cytoplasm"/>
    <property type="evidence" value="ECO:0007669"/>
    <property type="project" value="UniProtKB-SubCell"/>
</dbReference>
<dbReference type="GO" id="GO:0042025">
    <property type="term" value="C:host cell nucleus"/>
    <property type="evidence" value="ECO:0007669"/>
    <property type="project" value="UniProtKB-SubCell"/>
</dbReference>
<dbReference type="GO" id="GO:0003677">
    <property type="term" value="F:DNA binding"/>
    <property type="evidence" value="ECO:0007669"/>
    <property type="project" value="UniProtKB-UniRule"/>
</dbReference>
<dbReference type="GO" id="GO:0008270">
    <property type="term" value="F:zinc ion binding"/>
    <property type="evidence" value="ECO:0007669"/>
    <property type="project" value="UniProtKB-KW"/>
</dbReference>
<dbReference type="GO" id="GO:0006351">
    <property type="term" value="P:DNA-templated transcription"/>
    <property type="evidence" value="ECO:0007669"/>
    <property type="project" value="UniProtKB-UniRule"/>
</dbReference>
<dbReference type="GO" id="GO:0006355">
    <property type="term" value="P:regulation of DNA-templated transcription"/>
    <property type="evidence" value="ECO:0007669"/>
    <property type="project" value="UniProtKB-UniRule"/>
</dbReference>
<dbReference type="GO" id="GO:0052150">
    <property type="term" value="P:symbiont-mediated perturbation of host apoptosis"/>
    <property type="evidence" value="ECO:0007669"/>
    <property type="project" value="UniProtKB-KW"/>
</dbReference>
<dbReference type="GO" id="GO:0039648">
    <property type="term" value="P:symbiont-mediated perturbation of host ubiquitin-like protein modification"/>
    <property type="evidence" value="ECO:0007669"/>
    <property type="project" value="UniProtKB-UniRule"/>
</dbReference>
<dbReference type="GO" id="GO:0052170">
    <property type="term" value="P:symbiont-mediated suppression of host innate immune response"/>
    <property type="evidence" value="ECO:0007669"/>
    <property type="project" value="UniProtKB-KW"/>
</dbReference>
<dbReference type="GO" id="GO:0039502">
    <property type="term" value="P:symbiont-mediated suppression of host type I interferon-mediated signaling pathway"/>
    <property type="evidence" value="ECO:0007669"/>
    <property type="project" value="UniProtKB-UniRule"/>
</dbReference>
<dbReference type="Gene3D" id="3.30.240.40">
    <property type="entry name" value="E6 early regulatory protein"/>
    <property type="match status" value="2"/>
</dbReference>
<dbReference type="HAMAP" id="MF_04006">
    <property type="entry name" value="HPV_E6"/>
    <property type="match status" value="1"/>
</dbReference>
<dbReference type="InterPro" id="IPR001334">
    <property type="entry name" value="E6"/>
</dbReference>
<dbReference type="InterPro" id="IPR038575">
    <property type="entry name" value="E6_sf"/>
</dbReference>
<dbReference type="Pfam" id="PF00518">
    <property type="entry name" value="E6"/>
    <property type="match status" value="1"/>
</dbReference>
<dbReference type="SUPFAM" id="SSF161229">
    <property type="entry name" value="E6 C-terminal domain-like"/>
    <property type="match status" value="2"/>
</dbReference>